<keyword id="KW-0002">3D-structure</keyword>
<keyword id="KW-0119">Carbohydrate metabolism</keyword>
<keyword id="KW-0299">Galactose metabolism</keyword>
<keyword id="KW-0408">Iron</keyword>
<keyword id="KW-0479">Metal-binding</keyword>
<keyword id="KW-0548">Nucleotidyltransferase</keyword>
<keyword id="KW-1185">Reference proteome</keyword>
<keyword id="KW-0808">Transferase</keyword>
<keyword id="KW-0862">Zinc</keyword>
<gene>
    <name type="primary">galT</name>
    <name type="synonym">galB</name>
    <name type="ordered locus">b0758</name>
    <name type="ordered locus">JW0741</name>
</gene>
<sequence>MTQFNPVDHPHRRYNPLTGQWILVSPHRAKRPWQGAQETPAKQVLPAHDPDCFLCAGNVRVTGDKNPDYTGTYVFTNDFAALMSDTPDAPESHDPLMRCQSARGTSRVICFSPDHSKTLPELSVAALTEIVKTWQEQTAELGKTYPWVQVFENKGAAMGCSNPHPHGQIWANSFLPNEAEREDRLQKEYFAEQKSPMLVDYVQRELADGSRTVVETEHWLAVVPYWAAWPFETLLLPKAHVLRITDLTDAQRSDLALALKKLTSRYDNLFQCSFPYSMGWHGAPFNGEENQHWQLHAHFYPPLLRSATVRKFMVGYEMLAETQRDLTAEQAAERLRAVSDIHFRESGV</sequence>
<dbReference type="EC" id="2.7.7.12" evidence="2 3 4"/>
<dbReference type="EMBL" id="X06226">
    <property type="protein sequence ID" value="CAA29574.1"/>
    <property type="molecule type" value="Genomic_DNA"/>
</dbReference>
<dbReference type="EMBL" id="U00096">
    <property type="protein sequence ID" value="AAC73845.1"/>
    <property type="molecule type" value="Genomic_DNA"/>
</dbReference>
<dbReference type="EMBL" id="AP009048">
    <property type="protein sequence ID" value="BAA35420.1"/>
    <property type="molecule type" value="Genomic_DNA"/>
</dbReference>
<dbReference type="EMBL" id="X02306">
    <property type="protein sequence ID" value="CAA26171.1"/>
    <property type="molecule type" value="Genomic_DNA"/>
</dbReference>
<dbReference type="PIR" id="S00722">
    <property type="entry name" value="XNECUD"/>
</dbReference>
<dbReference type="RefSeq" id="NP_415279.1">
    <property type="nucleotide sequence ID" value="NC_000913.3"/>
</dbReference>
<dbReference type="RefSeq" id="WP_000191497.1">
    <property type="nucleotide sequence ID" value="NZ_SSZK01000002.1"/>
</dbReference>
<dbReference type="PDB" id="1GUP">
    <property type="method" value="X-ray"/>
    <property type="resolution" value="1.80 A"/>
    <property type="chains" value="A/B/C/D=1-348"/>
</dbReference>
<dbReference type="PDB" id="1GUQ">
    <property type="method" value="X-ray"/>
    <property type="resolution" value="1.80 A"/>
    <property type="chains" value="A/B/C/D=1-348"/>
</dbReference>
<dbReference type="PDB" id="1HXP">
    <property type="method" value="X-ray"/>
    <property type="resolution" value="1.80 A"/>
    <property type="chains" value="A/B=1-348"/>
</dbReference>
<dbReference type="PDB" id="1HXQ">
    <property type="method" value="X-ray"/>
    <property type="resolution" value="1.86 A"/>
    <property type="chains" value="A/B=1-348"/>
</dbReference>
<dbReference type="PDBsum" id="1GUP"/>
<dbReference type="PDBsum" id="1GUQ"/>
<dbReference type="PDBsum" id="1HXP"/>
<dbReference type="PDBsum" id="1HXQ"/>
<dbReference type="SMR" id="P09148"/>
<dbReference type="BioGRID" id="4261703">
    <property type="interactions" value="398"/>
</dbReference>
<dbReference type="DIP" id="DIP-9735N"/>
<dbReference type="FunCoup" id="P09148">
    <property type="interactions" value="615"/>
</dbReference>
<dbReference type="IntAct" id="P09148">
    <property type="interactions" value="1"/>
</dbReference>
<dbReference type="STRING" id="511145.b0758"/>
<dbReference type="DrugBank" id="DB01861">
    <property type="generic name" value="Uridine diphosphate glucose"/>
</dbReference>
<dbReference type="DrugBank" id="DB03685">
    <property type="generic name" value="Uridine monophosphate"/>
</dbReference>
<dbReference type="DrugBank" id="DB03435">
    <property type="generic name" value="Uridine-5'-Diphosphate"/>
</dbReference>
<dbReference type="jPOST" id="P09148"/>
<dbReference type="PaxDb" id="511145-b0758"/>
<dbReference type="EnsemblBacteria" id="AAC73845">
    <property type="protein sequence ID" value="AAC73845"/>
    <property type="gene ID" value="b0758"/>
</dbReference>
<dbReference type="GeneID" id="945357"/>
<dbReference type="KEGG" id="ecj:JW0741"/>
<dbReference type="KEGG" id="eco:b0758"/>
<dbReference type="KEGG" id="ecoc:C3026_03845"/>
<dbReference type="PATRIC" id="fig|1411691.4.peg.1520"/>
<dbReference type="EchoBASE" id="EB0361"/>
<dbReference type="eggNOG" id="COG1085">
    <property type="taxonomic scope" value="Bacteria"/>
</dbReference>
<dbReference type="HOGENOM" id="CLU_029960_0_0_6"/>
<dbReference type="InParanoid" id="P09148"/>
<dbReference type="OMA" id="CFENRGA"/>
<dbReference type="OrthoDB" id="9769064at2"/>
<dbReference type="PhylomeDB" id="P09148"/>
<dbReference type="BioCyc" id="EcoCyc:GALACTURIDYLYLTRANS-MONOMER"/>
<dbReference type="BioCyc" id="MetaCyc:GALACTURIDYLYLTRANS-MONOMER"/>
<dbReference type="BRENDA" id="2.7.7.12">
    <property type="organism ID" value="2026"/>
</dbReference>
<dbReference type="SABIO-RK" id="P09148"/>
<dbReference type="UniPathway" id="UPA00214"/>
<dbReference type="EvolutionaryTrace" id="P09148"/>
<dbReference type="PRO" id="PR:P09148"/>
<dbReference type="Proteomes" id="UP000000625">
    <property type="component" value="Chromosome"/>
</dbReference>
<dbReference type="GO" id="GO:0005737">
    <property type="term" value="C:cytoplasm"/>
    <property type="evidence" value="ECO:0000318"/>
    <property type="project" value="GO_Central"/>
</dbReference>
<dbReference type="GO" id="GO:0005829">
    <property type="term" value="C:cytosol"/>
    <property type="evidence" value="ECO:0000314"/>
    <property type="project" value="EcoCyc"/>
</dbReference>
<dbReference type="GO" id="GO:0008198">
    <property type="term" value="F:ferrous iron binding"/>
    <property type="evidence" value="ECO:0000314"/>
    <property type="project" value="EcoCyc"/>
</dbReference>
<dbReference type="GO" id="GO:0004335">
    <property type="term" value="F:galactokinase activity"/>
    <property type="evidence" value="ECO:0000315"/>
    <property type="project" value="CACAO"/>
</dbReference>
<dbReference type="GO" id="GO:0008108">
    <property type="term" value="F:UDP-glucose:hexose-1-phosphate uridylyltransferase activity"/>
    <property type="evidence" value="ECO:0000314"/>
    <property type="project" value="EcoCyc"/>
</dbReference>
<dbReference type="GO" id="GO:0008270">
    <property type="term" value="F:zinc ion binding"/>
    <property type="evidence" value="ECO:0000314"/>
    <property type="project" value="EcoCyc"/>
</dbReference>
<dbReference type="GO" id="GO:0033499">
    <property type="term" value="P:galactose catabolic process via UDP-galactose, Leloir pathway"/>
    <property type="evidence" value="ECO:0000315"/>
    <property type="project" value="EcoCyc"/>
</dbReference>
<dbReference type="CDD" id="cd00608">
    <property type="entry name" value="GalT"/>
    <property type="match status" value="1"/>
</dbReference>
<dbReference type="FunFam" id="3.30.428.10:FF:000001">
    <property type="entry name" value="Galactose-1-phosphate uridylyltransferase"/>
    <property type="match status" value="1"/>
</dbReference>
<dbReference type="FunFam" id="3.30.428.10:FF:000002">
    <property type="entry name" value="Galactose-1-phosphate uridylyltransferase"/>
    <property type="match status" value="1"/>
</dbReference>
<dbReference type="Gene3D" id="3.30.428.10">
    <property type="entry name" value="HIT-like"/>
    <property type="match status" value="2"/>
</dbReference>
<dbReference type="InterPro" id="IPR001937">
    <property type="entry name" value="GalP_UDPtransf1"/>
</dbReference>
<dbReference type="InterPro" id="IPR019779">
    <property type="entry name" value="GalP_UDPtransf1_His-AS"/>
</dbReference>
<dbReference type="InterPro" id="IPR005850">
    <property type="entry name" value="GalP_Utransf_C"/>
</dbReference>
<dbReference type="InterPro" id="IPR005849">
    <property type="entry name" value="GalP_Utransf_N"/>
</dbReference>
<dbReference type="InterPro" id="IPR036265">
    <property type="entry name" value="HIT-like_sf"/>
</dbReference>
<dbReference type="NCBIfam" id="TIGR00209">
    <property type="entry name" value="galT_1"/>
    <property type="match status" value="1"/>
</dbReference>
<dbReference type="NCBIfam" id="NF008724">
    <property type="entry name" value="PRK11720.1"/>
    <property type="match status" value="1"/>
</dbReference>
<dbReference type="PANTHER" id="PTHR11943">
    <property type="entry name" value="GALACTOSE-1-PHOSPHATE URIDYLYLTRANSFERASE"/>
    <property type="match status" value="1"/>
</dbReference>
<dbReference type="PANTHER" id="PTHR11943:SF1">
    <property type="entry name" value="GALACTOSE-1-PHOSPHATE URIDYLYLTRANSFERASE"/>
    <property type="match status" value="1"/>
</dbReference>
<dbReference type="Pfam" id="PF02744">
    <property type="entry name" value="GalP_UDP_tr_C"/>
    <property type="match status" value="1"/>
</dbReference>
<dbReference type="Pfam" id="PF01087">
    <property type="entry name" value="GalP_UDP_transf"/>
    <property type="match status" value="1"/>
</dbReference>
<dbReference type="PIRSF" id="PIRSF000808">
    <property type="entry name" value="GalT"/>
    <property type="match status" value="1"/>
</dbReference>
<dbReference type="SUPFAM" id="SSF54197">
    <property type="entry name" value="HIT-like"/>
    <property type="match status" value="2"/>
</dbReference>
<dbReference type="PROSITE" id="PS00117">
    <property type="entry name" value="GAL_P_UDP_TRANSF_I"/>
    <property type="match status" value="1"/>
</dbReference>
<organism>
    <name type="scientific">Escherichia coli (strain K12)</name>
    <dbReference type="NCBI Taxonomy" id="83333"/>
    <lineage>
        <taxon>Bacteria</taxon>
        <taxon>Pseudomonadati</taxon>
        <taxon>Pseudomonadota</taxon>
        <taxon>Gammaproteobacteria</taxon>
        <taxon>Enterobacterales</taxon>
        <taxon>Enterobacteriaceae</taxon>
        <taxon>Escherichia</taxon>
    </lineage>
</organism>
<comment type="catalytic activity">
    <reaction evidence="2 3 4">
        <text>alpha-D-galactose 1-phosphate + UDP-alpha-D-glucose = alpha-D-glucose 1-phosphate + UDP-alpha-D-galactose</text>
        <dbReference type="Rhea" id="RHEA:13989"/>
        <dbReference type="ChEBI" id="CHEBI:58336"/>
        <dbReference type="ChEBI" id="CHEBI:58601"/>
        <dbReference type="ChEBI" id="CHEBI:58885"/>
        <dbReference type="ChEBI" id="CHEBI:66914"/>
        <dbReference type="EC" id="2.7.7.12"/>
    </reaction>
</comment>
<comment type="cofactor">
    <cofactor evidence="2 5 6">
        <name>Zn(2+)</name>
        <dbReference type="ChEBI" id="CHEBI:29105"/>
    </cofactor>
    <text evidence="2 5 6">Binds 1 zinc ion per subunit. Zinc binding seems to play a structural role.</text>
</comment>
<comment type="biophysicochemical properties">
    <kinetics>
        <KM evidence="3">0.2 mM for uridine 5'-diphosphate glucose</KM>
        <KM evidence="3">0.303 mM for galactose-1-phosphate</KM>
        <KM evidence="3">0.121 mM for uridine 5'-diphosphate galactose</KM>
        <KM evidence="3">0.157 mM for glucose-1-phosphate</KM>
        <Vmax evidence="3">180.0 umol/min/mg enzyme</Vmax>
    </kinetics>
</comment>
<comment type="pathway">
    <text>Carbohydrate metabolism; galactose metabolism.</text>
</comment>
<comment type="subunit">
    <text>Homodimer.</text>
</comment>
<comment type="miscellaneous">
    <text evidence="3">Iron binding is not required for protein folding or enzyme activity.</text>
</comment>
<comment type="similarity">
    <text evidence="7">Belongs to the galactose-1-phosphate uridylyltransferase type 1 family.</text>
</comment>
<protein>
    <recommendedName>
        <fullName>Galactose-1-phosphate uridylyltransferase</fullName>
        <shortName>Gal-1-P uridylyltransferase</shortName>
        <ecNumber evidence="2 3 4">2.7.7.12</ecNumber>
    </recommendedName>
    <alternativeName>
        <fullName>UDP-glucose--hexose-1-phosphate uridylyltransferase</fullName>
    </alternativeName>
</protein>
<evidence type="ECO:0000255" key="1">
    <source>
        <dbReference type="PROSITE-ProRule" id="PRU10033"/>
    </source>
</evidence>
<evidence type="ECO:0000269" key="2">
    <source>
    </source>
</evidence>
<evidence type="ECO:0000269" key="3">
    <source>
    </source>
</evidence>
<evidence type="ECO:0000269" key="4">
    <source>
    </source>
</evidence>
<evidence type="ECO:0000269" key="5">
    <source>
    </source>
</evidence>
<evidence type="ECO:0000269" key="6">
    <source>
    </source>
</evidence>
<evidence type="ECO:0000305" key="7"/>
<evidence type="ECO:0007744" key="8">
    <source>
        <dbReference type="PDB" id="1GUQ"/>
    </source>
</evidence>
<evidence type="ECO:0007744" key="9">
    <source>
        <dbReference type="PDB" id="1HXQ"/>
    </source>
</evidence>
<evidence type="ECO:0007829" key="10">
    <source>
        <dbReference type="PDB" id="1GUP"/>
    </source>
</evidence>
<accession>P09148</accession>
<accession>P78270</accession>
<feature type="chain" id="PRO_0000169894" description="Galactose-1-phosphate uridylyltransferase">
    <location>
        <begin position="1"/>
        <end position="348"/>
    </location>
</feature>
<feature type="active site" description="Tele-UMP-histidine intermediate" evidence="1 5 6">
    <location>
        <position position="166"/>
    </location>
</feature>
<feature type="binding site" evidence="6 8">
    <location>
        <begin position="28"/>
        <end position="31"/>
    </location>
    <ligand>
        <name>UDP-alpha-D-glucose</name>
        <dbReference type="ChEBI" id="CHEBI:58885"/>
        <note>ligand shared between dimeric partners</note>
    </ligand>
</feature>
<feature type="binding site" evidence="5 6 8 9">
    <location>
        <position position="52"/>
    </location>
    <ligand>
        <name>Zn(2+)</name>
        <dbReference type="ChEBI" id="CHEBI:29105"/>
    </ligand>
</feature>
<feature type="binding site" evidence="5 6 8 9">
    <location>
        <position position="55"/>
    </location>
    <ligand>
        <name>Zn(2+)</name>
        <dbReference type="ChEBI" id="CHEBI:29105"/>
    </ligand>
</feature>
<feature type="binding site" description="in other chain" evidence="6 8">
    <location>
        <position position="61"/>
    </location>
    <ligand>
        <name>UDP-alpha-D-glucose</name>
        <dbReference type="ChEBI" id="CHEBI:58885"/>
        <note>ligand shared between dimeric partners</note>
    </ligand>
</feature>
<feature type="binding site" description="in other chain" evidence="6 8">
    <location>
        <begin position="77"/>
        <end position="78"/>
    </location>
    <ligand>
        <name>UDP-alpha-D-glucose</name>
        <dbReference type="ChEBI" id="CHEBI:58885"/>
        <note>ligand shared between dimeric partners</note>
    </ligand>
</feature>
<feature type="binding site" evidence="5 6 8 9">
    <location>
        <position position="115"/>
    </location>
    <ligand>
        <name>Zn(2+)</name>
        <dbReference type="ChEBI" id="CHEBI:29105"/>
    </ligand>
</feature>
<feature type="binding site" description="in other chain" evidence="6 8">
    <location>
        <position position="153"/>
    </location>
    <ligand>
        <name>UDP-alpha-D-glucose</name>
        <dbReference type="ChEBI" id="CHEBI:58885"/>
        <note>ligand shared between dimeric partners</note>
    </ligand>
</feature>
<feature type="binding site" description="in other chain" evidence="6 8">
    <location>
        <begin position="159"/>
        <end position="161"/>
    </location>
    <ligand>
        <name>UDP-alpha-D-glucose</name>
        <dbReference type="ChEBI" id="CHEBI:58885"/>
        <note>ligand shared between dimeric partners</note>
    </ligand>
</feature>
<feature type="binding site" evidence="5 6 8 9">
    <location>
        <position position="164"/>
    </location>
    <ligand>
        <name>Zn(2+)</name>
        <dbReference type="ChEBI" id="CHEBI:29105"/>
    </ligand>
</feature>
<feature type="binding site" description="in other chain" evidence="6 8">
    <location>
        <position position="168"/>
    </location>
    <ligand>
        <name>UDP-alpha-D-glucose</name>
        <dbReference type="ChEBI" id="CHEBI:58885"/>
        <note>ligand shared between dimeric partners</note>
    </ligand>
</feature>
<feature type="binding site" evidence="5 6 8 9">
    <location>
        <position position="182"/>
    </location>
    <ligand>
        <name>Fe cation</name>
        <dbReference type="ChEBI" id="CHEBI:24875"/>
    </ligand>
</feature>
<feature type="binding site" evidence="5 6 8 9">
    <location>
        <position position="281"/>
    </location>
    <ligand>
        <name>Fe cation</name>
        <dbReference type="ChEBI" id="CHEBI:24875"/>
    </ligand>
</feature>
<feature type="binding site" evidence="5 6 8 9">
    <location>
        <position position="296"/>
    </location>
    <ligand>
        <name>Fe cation</name>
        <dbReference type="ChEBI" id="CHEBI:24875"/>
    </ligand>
</feature>
<feature type="binding site" evidence="5 6 8 9">
    <location>
        <position position="298"/>
    </location>
    <ligand>
        <name>Fe cation</name>
        <dbReference type="ChEBI" id="CHEBI:24875"/>
    </ligand>
</feature>
<feature type="binding site" evidence="6 8">
    <location>
        <begin position="311"/>
        <end position="312"/>
    </location>
    <ligand>
        <name>UDP-alpha-D-glucose</name>
        <dbReference type="ChEBI" id="CHEBI:58885"/>
        <note>ligand shared between dimeric partners</note>
    </ligand>
</feature>
<feature type="binding site" evidence="6 8">
    <location>
        <begin position="316"/>
        <end position="317"/>
    </location>
    <ligand>
        <name>UDP-alpha-D-glucose</name>
        <dbReference type="ChEBI" id="CHEBI:58885"/>
        <note>ligand shared between dimeric partners</note>
    </ligand>
</feature>
<feature type="binding site" description="in other chain" evidence="6 8">
    <location>
        <position position="323"/>
    </location>
    <ligand>
        <name>UDP-alpha-D-glucose</name>
        <dbReference type="ChEBI" id="CHEBI:58885"/>
        <note>ligand shared between dimeric partners</note>
    </ligand>
</feature>
<feature type="mutagenesis site" description="Decreases enzyme activity 3000-fold." evidence="2">
    <original>C</original>
    <variation>S</variation>
    <location>
        <position position="52"/>
    </location>
</feature>
<feature type="mutagenesis site" description="Decreases enzyme activity 600-fold." evidence="2">
    <original>C</original>
    <variation>S</variation>
    <location>
        <position position="55"/>
    </location>
</feature>
<feature type="mutagenesis site" description="Decreases enzyme activity by 98%." evidence="2">
    <original>H</original>
    <variation>N</variation>
    <location>
        <position position="115"/>
    </location>
</feature>
<feature type="mutagenesis site" description="Slight inhibition of enzymatic activity." evidence="3">
    <original>C</original>
    <variation>S</variation>
    <variation>A</variation>
    <location>
        <position position="160"/>
    </location>
</feature>
<feature type="mutagenesis site" description="7000-fold reduction in specific activity." evidence="3">
    <original>S</original>
    <variation>A</variation>
    <location>
        <position position="161"/>
    </location>
</feature>
<feature type="mutagenesis site" description="Decreases enzyme activity 10000-fold." evidence="2">
    <original>H</original>
    <variation>N</variation>
    <location>
        <position position="164"/>
    </location>
</feature>
<feature type="mutagenesis site" description="Abolishes enzymatic activity." evidence="6">
    <original>H</original>
    <variation>G</variation>
    <location>
        <position position="166"/>
    </location>
</feature>
<feature type="mutagenesis site" description="Decreases enzyme activity by about 50%. Abolishes iron binding, but has no effect on zinc binding." evidence="2">
    <original>E</original>
    <variation>A</variation>
    <location>
        <position position="182"/>
    </location>
</feature>
<feature type="sequence conflict" description="In Ref. 1; CAA29574." evidence="7" ref="1">
    <original>AKR</original>
    <variation>LS</variation>
    <location>
        <begin position="29"/>
        <end position="31"/>
    </location>
</feature>
<feature type="turn" evidence="10">
    <location>
        <begin position="6"/>
        <end position="8"/>
    </location>
</feature>
<feature type="strand" evidence="10">
    <location>
        <begin position="11"/>
        <end position="14"/>
    </location>
</feature>
<feature type="turn" evidence="10">
    <location>
        <begin position="16"/>
        <end position="18"/>
    </location>
</feature>
<feature type="strand" evidence="10">
    <location>
        <begin position="21"/>
        <end position="24"/>
    </location>
</feature>
<feature type="helix" evidence="10">
    <location>
        <begin position="28"/>
        <end position="30"/>
    </location>
</feature>
<feature type="strand" evidence="10">
    <location>
        <begin position="73"/>
        <end position="76"/>
    </location>
</feature>
<feature type="strand" evidence="10">
    <location>
        <begin position="95"/>
        <end position="97"/>
    </location>
</feature>
<feature type="strand" evidence="10">
    <location>
        <begin position="99"/>
        <end position="101"/>
    </location>
</feature>
<feature type="strand" evidence="10">
    <location>
        <begin position="104"/>
        <end position="111"/>
    </location>
</feature>
<feature type="helix" evidence="10">
    <location>
        <begin position="119"/>
        <end position="121"/>
    </location>
</feature>
<feature type="helix" evidence="10">
    <location>
        <begin position="124"/>
        <end position="144"/>
    </location>
</feature>
<feature type="strand" evidence="10">
    <location>
        <begin position="146"/>
        <end position="155"/>
    </location>
</feature>
<feature type="helix" evidence="10">
    <location>
        <begin position="156"/>
        <end position="158"/>
    </location>
</feature>
<feature type="strand" evidence="10">
    <location>
        <begin position="164"/>
        <end position="174"/>
    </location>
</feature>
<feature type="helix" evidence="10">
    <location>
        <begin position="177"/>
        <end position="193"/>
    </location>
</feature>
<feature type="helix" evidence="10">
    <location>
        <begin position="197"/>
        <end position="208"/>
    </location>
</feature>
<feature type="strand" evidence="10">
    <location>
        <begin position="212"/>
        <end position="215"/>
    </location>
</feature>
<feature type="strand" evidence="10">
    <location>
        <begin position="217"/>
        <end position="222"/>
    </location>
</feature>
<feature type="strand" evidence="10">
    <location>
        <begin position="233"/>
        <end position="239"/>
    </location>
</feature>
<feature type="helix" evidence="10">
    <location>
        <begin position="244"/>
        <end position="246"/>
    </location>
</feature>
<feature type="helix" evidence="10">
    <location>
        <begin position="249"/>
        <end position="270"/>
    </location>
</feature>
<feature type="strand" evidence="10">
    <location>
        <begin position="276"/>
        <end position="281"/>
    </location>
</feature>
<feature type="strand" evidence="10">
    <location>
        <begin position="285"/>
        <end position="288"/>
    </location>
</feature>
<feature type="strand" evidence="10">
    <location>
        <begin position="296"/>
        <end position="300"/>
    </location>
</feature>
<feature type="strand" evidence="10">
    <location>
        <begin position="305"/>
        <end position="308"/>
    </location>
</feature>
<feature type="helix" evidence="10">
    <location>
        <begin position="316"/>
        <end position="319"/>
    </location>
</feature>
<feature type="strand" evidence="10">
    <location>
        <begin position="323"/>
        <end position="326"/>
    </location>
</feature>
<feature type="helix" evidence="10">
    <location>
        <begin position="328"/>
        <end position="336"/>
    </location>
</feature>
<feature type="helix" evidence="10">
    <location>
        <begin position="343"/>
        <end position="346"/>
    </location>
</feature>
<proteinExistence type="evidence at protein level"/>
<reference key="1">
    <citation type="journal article" date="1986" name="Nucleic Acids Res.">
        <title>Nucleotide sequences of the gal E gene and the gal T gene of E. coli.</title>
        <authorList>
            <person name="Lemaire H.-G."/>
            <person name="Mueller-Hill B."/>
        </authorList>
    </citation>
    <scope>NUCLEOTIDE SEQUENCE [GENOMIC DNA]</scope>
</reference>
<reference key="2">
    <citation type="journal article" date="1996" name="DNA Res.">
        <title>A 718-kb DNA sequence of the Escherichia coli K-12 genome corresponding to the 12.7-28.0 min region on the linkage map.</title>
        <authorList>
            <person name="Oshima T."/>
            <person name="Aiba H."/>
            <person name="Baba T."/>
            <person name="Fujita K."/>
            <person name="Hayashi K."/>
            <person name="Honjo A."/>
            <person name="Ikemoto K."/>
            <person name="Inada T."/>
            <person name="Itoh T."/>
            <person name="Kajihara M."/>
            <person name="Kanai K."/>
            <person name="Kashimoto K."/>
            <person name="Kimura S."/>
            <person name="Kitagawa M."/>
            <person name="Makino K."/>
            <person name="Masuda S."/>
            <person name="Miki T."/>
            <person name="Mizobuchi K."/>
            <person name="Mori H."/>
            <person name="Motomura K."/>
            <person name="Nakamura Y."/>
            <person name="Nashimoto H."/>
            <person name="Nishio Y."/>
            <person name="Saito N."/>
            <person name="Sampei G."/>
            <person name="Seki Y."/>
            <person name="Tagami H."/>
            <person name="Takemoto K."/>
            <person name="Wada C."/>
            <person name="Yamamoto Y."/>
            <person name="Yano M."/>
            <person name="Horiuchi T."/>
        </authorList>
    </citation>
    <scope>NUCLEOTIDE SEQUENCE [LARGE SCALE GENOMIC DNA]</scope>
    <source>
        <strain>K12 / W3110 / ATCC 27325 / DSM 5911</strain>
    </source>
</reference>
<reference key="3">
    <citation type="journal article" date="1997" name="Science">
        <title>The complete genome sequence of Escherichia coli K-12.</title>
        <authorList>
            <person name="Blattner F.R."/>
            <person name="Plunkett G. III"/>
            <person name="Bloch C.A."/>
            <person name="Perna N.T."/>
            <person name="Burland V."/>
            <person name="Riley M."/>
            <person name="Collado-Vides J."/>
            <person name="Glasner J.D."/>
            <person name="Rode C.K."/>
            <person name="Mayhew G.F."/>
            <person name="Gregor J."/>
            <person name="Davis N.W."/>
            <person name="Kirkpatrick H.A."/>
            <person name="Goeden M.A."/>
            <person name="Rose D.J."/>
            <person name="Mau B."/>
            <person name="Shao Y."/>
        </authorList>
    </citation>
    <scope>NUCLEOTIDE SEQUENCE [LARGE SCALE GENOMIC DNA]</scope>
    <source>
        <strain>K12 / MG1655 / ATCC 47076</strain>
    </source>
</reference>
<reference key="4">
    <citation type="journal article" date="2006" name="Mol. Syst. Biol.">
        <title>Highly accurate genome sequences of Escherichia coli K-12 strains MG1655 and W3110.</title>
        <authorList>
            <person name="Hayashi K."/>
            <person name="Morooka N."/>
            <person name="Yamamoto Y."/>
            <person name="Fujita K."/>
            <person name="Isono K."/>
            <person name="Choi S."/>
            <person name="Ohtsubo E."/>
            <person name="Baba T."/>
            <person name="Wanner B.L."/>
            <person name="Mori H."/>
            <person name="Horiuchi T."/>
        </authorList>
    </citation>
    <scope>NUCLEOTIDE SEQUENCE [LARGE SCALE GENOMIC DNA]</scope>
    <source>
        <strain>K12 / W3110 / ATCC 27325 / DSM 5911</strain>
    </source>
</reference>
<reference key="5">
    <citation type="journal article" date="1985" name="Nucleic Acids Res.">
        <title>Structure of the galactokinase gene of Escherichia coli, the last (?) gene of the gal operon.</title>
        <authorList>
            <person name="Debouck C."/>
            <person name="Riccio A."/>
            <person name="Schumperli D."/>
            <person name="McKenney K."/>
            <person name="Jeffers J."/>
            <person name="Hughes C."/>
            <person name="Rosenberg M."/>
            <person name="Heusterspreute M."/>
            <person name="Brunel F."/>
            <person name="Davison J."/>
        </authorList>
    </citation>
    <scope>NUCLEOTIDE SEQUENCE [GENOMIC DNA] OF 294-348</scope>
</reference>
<reference key="6">
    <citation type="journal article" date="1987" name="Nucleic Acids Res.">
        <title>The nucleotide sequence of the gal T gene of Escherichia coli.</title>
        <authorList>
            <person name="Cornwell T.L."/>
            <person name="Adhya S.L."/>
            <person name="Reznikoff W.S."/>
            <person name="Frey P.A."/>
        </authorList>
    </citation>
    <scope>NUCLEOTIDE SEQUENCE [GENOMIC DNA] OF 27-38</scope>
</reference>
<reference key="7">
    <citation type="journal article" date="1977" name="Biochemistry">
        <title>Galactose-1-phosphate uridylyltransferase: isolation and properties of a uridylyl-enzyme intermediate.</title>
        <authorList>
            <person name="Wong L.J."/>
            <person name="Sheu K.F."/>
            <person name="Lee S.L."/>
            <person name="Frey P.A."/>
        </authorList>
    </citation>
    <scope>CHARACTERIZATION</scope>
    <scope>CATALYTIC ACTIVITY</scope>
</reference>
<reference key="8">
    <citation type="journal article" date="1999" name="Biochemistry">
        <title>Significance of metal ions in galactose-1-phosphate uridylyltransferase: an essential structural zinc and a nonessential structural iron.</title>
        <authorList>
            <person name="Geeganage S."/>
            <person name="Frey P.A."/>
        </authorList>
    </citation>
    <scope>CATALYTIC ACTIVITY</scope>
    <scope>COFACTOR</scope>
    <scope>MUTAGENESIS OF CYS-52; CYS-55; HIS-115; HIS-164 AND GLU-182</scope>
</reference>
<reference key="9">
    <citation type="journal article" date="2000" name="Biochemistry">
        <title>Roles of two conserved amino acid residues in the active site of galactose-1-phosphate uridylyltransferase: an essential serine and a nonessential cysteine.</title>
        <authorList>
            <person name="Geeganage S."/>
            <person name="Ling V.W."/>
            <person name="Frey P.A."/>
        </authorList>
    </citation>
    <scope>CATALYTIC ACTIVITY</scope>
    <scope>KINETIC PARAMETERS</scope>
    <scope>MUTAGENESIS OF CYS-160 AND SER-161</scope>
</reference>
<reference key="10">
    <citation type="journal article" date="1996" name="Biochemistry">
        <title>The structure of nucleotidylated histidine-166 of galactose-1-phosphate uridylyltransferase provides insight into phosphoryl group transfer.</title>
        <authorList>
            <person name="Wedekind J.E."/>
            <person name="Frey P.A."/>
            <person name="Rayment I."/>
        </authorList>
    </citation>
    <scope>X-RAY CRYSTALLOGRAPHY (1.86 ANGSTROMS) IN COMPLEX WITH IRON; URIDINE-5'-MONOPHOSPHATE AND ZINC</scope>
    <scope>ACTIVE SITE HIS-166</scope>
</reference>
<reference key="11">
    <citation type="journal article" date="1995" name="Biochemistry">
        <title>Three-dimensional structure of galactose-1-phosphate uridylyltransferase from Escherichia coli at 1.8-A resolution.</title>
        <authorList>
            <person name="Wedekind J.E."/>
            <person name="Frey P.A."/>
            <person name="Rayment I."/>
        </authorList>
    </citation>
    <scope>X-RAY CRYSTALLOGRAPHY (1.8 ANGSTROMS)</scope>
</reference>
<reference key="12">
    <citation type="journal article" date="1997" name="Biochemistry">
        <title>Structural analysis of the H166G site-directed mutant of galactose-1-phosphate uridylyltransferase complexed with either UDP-glucose or UDP-galactose: detailed description of the nucleotide sugar binding site.</title>
        <authorList>
            <person name="Thoden J.B."/>
            <person name="Ruzicka F.J."/>
            <person name="Frey P.A."/>
            <person name="Rayment I."/>
            <person name="Holden H.M."/>
        </authorList>
    </citation>
    <scope>X-RAY CRYSTALLOGRAPHY (1.8 ANGSTROMS) IN COMPLEX WITH IRON; UDP-ALPHA-D-GLUCOSE AND ZINC</scope>
    <scope>MUTAGENESIS OF HIS-166</scope>
    <scope>ACTIVE SITE</scope>
</reference>
<name>GAL7_ECOLI</name>